<keyword id="KW-0460">Magnesium</keyword>
<keyword id="KW-0479">Metal-binding</keyword>
<keyword id="KW-1185">Reference proteome</keyword>
<keyword id="KW-0784">Thiamine biosynthesis</keyword>
<keyword id="KW-0808">Transferase</keyword>
<sequence>MYQPEFPPVPFRLGLYPVVDSVQWIERLLDAGVRTLQLRIKDQRDEEVEADVVAAIALGRRYNARLFINDYWRLAIKHQAYGVHLGQEDLQATDLSTIRAAGLRLGVSTHDDMEIDVALAARPSYIALGHVFPTQTKQMPSAPQGLEQLARHVERLADYPTVAIGGISLARAPAVIATGVGSIAVVSAITQAADWRLATAQLLEIAGVGDE</sequence>
<feature type="chain" id="PRO_0000157011" description="Thiamine-phosphate synthase">
    <location>
        <begin position="1"/>
        <end position="211"/>
    </location>
</feature>
<feature type="binding site" evidence="1">
    <location>
        <begin position="37"/>
        <end position="41"/>
    </location>
    <ligand>
        <name>4-amino-2-methyl-5-(diphosphooxymethyl)pyrimidine</name>
        <dbReference type="ChEBI" id="CHEBI:57841"/>
    </ligand>
</feature>
<feature type="binding site" evidence="1">
    <location>
        <position position="69"/>
    </location>
    <ligand>
        <name>4-amino-2-methyl-5-(diphosphooxymethyl)pyrimidine</name>
        <dbReference type="ChEBI" id="CHEBI:57841"/>
    </ligand>
</feature>
<feature type="binding site" evidence="1">
    <location>
        <position position="70"/>
    </location>
    <ligand>
        <name>Mg(2+)</name>
        <dbReference type="ChEBI" id="CHEBI:18420"/>
    </ligand>
</feature>
<feature type="binding site" evidence="1">
    <location>
        <position position="89"/>
    </location>
    <ligand>
        <name>Mg(2+)</name>
        <dbReference type="ChEBI" id="CHEBI:18420"/>
    </ligand>
</feature>
<feature type="binding site" evidence="1">
    <location>
        <position position="108"/>
    </location>
    <ligand>
        <name>4-amino-2-methyl-5-(diphosphooxymethyl)pyrimidine</name>
        <dbReference type="ChEBI" id="CHEBI:57841"/>
    </ligand>
</feature>
<feature type="binding site" evidence="1">
    <location>
        <begin position="134"/>
        <end position="136"/>
    </location>
    <ligand>
        <name>2-[(2R,5Z)-2-carboxy-4-methylthiazol-5(2H)-ylidene]ethyl phosphate</name>
        <dbReference type="ChEBI" id="CHEBI:62899"/>
    </ligand>
</feature>
<feature type="binding site" evidence="1">
    <location>
        <position position="137"/>
    </location>
    <ligand>
        <name>4-amino-2-methyl-5-(diphosphooxymethyl)pyrimidine</name>
        <dbReference type="ChEBI" id="CHEBI:57841"/>
    </ligand>
</feature>
<feature type="binding site" evidence="1">
    <location>
        <position position="166"/>
    </location>
    <ligand>
        <name>2-[(2R,5Z)-2-carboxy-4-methylthiazol-5(2H)-ylidene]ethyl phosphate</name>
        <dbReference type="ChEBI" id="CHEBI:62899"/>
    </ligand>
</feature>
<feature type="binding site" evidence="1">
    <location>
        <begin position="186"/>
        <end position="187"/>
    </location>
    <ligand>
        <name>2-[(2R,5Z)-2-carboxy-4-methylthiazol-5(2H)-ylidene]ethyl phosphate</name>
        <dbReference type="ChEBI" id="CHEBI:62899"/>
    </ligand>
</feature>
<dbReference type="EC" id="2.5.1.3" evidence="1"/>
<dbReference type="EMBL" id="AE014075">
    <property type="protein sequence ID" value="AAN83378.1"/>
    <property type="status" value="ALT_INIT"/>
    <property type="molecule type" value="Genomic_DNA"/>
</dbReference>
<dbReference type="RefSeq" id="WP_001305322.1">
    <property type="nucleotide sequence ID" value="NZ_CP051263.1"/>
</dbReference>
<dbReference type="SMR" id="Q8FB78"/>
<dbReference type="STRING" id="199310.c4950"/>
<dbReference type="KEGG" id="ecc:c4950"/>
<dbReference type="eggNOG" id="COG0352">
    <property type="taxonomic scope" value="Bacteria"/>
</dbReference>
<dbReference type="HOGENOM" id="CLU_018272_3_3_6"/>
<dbReference type="UniPathway" id="UPA00060">
    <property type="reaction ID" value="UER00141"/>
</dbReference>
<dbReference type="Proteomes" id="UP000001410">
    <property type="component" value="Chromosome"/>
</dbReference>
<dbReference type="GO" id="GO:0005737">
    <property type="term" value="C:cytoplasm"/>
    <property type="evidence" value="ECO:0007669"/>
    <property type="project" value="TreeGrafter"/>
</dbReference>
<dbReference type="GO" id="GO:0000287">
    <property type="term" value="F:magnesium ion binding"/>
    <property type="evidence" value="ECO:0007669"/>
    <property type="project" value="UniProtKB-UniRule"/>
</dbReference>
<dbReference type="GO" id="GO:0004789">
    <property type="term" value="F:thiamine-phosphate diphosphorylase activity"/>
    <property type="evidence" value="ECO:0007669"/>
    <property type="project" value="UniProtKB-UniRule"/>
</dbReference>
<dbReference type="GO" id="GO:0009228">
    <property type="term" value="P:thiamine biosynthetic process"/>
    <property type="evidence" value="ECO:0007669"/>
    <property type="project" value="UniProtKB-KW"/>
</dbReference>
<dbReference type="GO" id="GO:0009229">
    <property type="term" value="P:thiamine diphosphate biosynthetic process"/>
    <property type="evidence" value="ECO:0007669"/>
    <property type="project" value="UniProtKB-UniRule"/>
</dbReference>
<dbReference type="CDD" id="cd00564">
    <property type="entry name" value="TMP_TenI"/>
    <property type="match status" value="1"/>
</dbReference>
<dbReference type="FunFam" id="3.20.20.70:FF:000064">
    <property type="entry name" value="Thiamine-phosphate synthase"/>
    <property type="match status" value="1"/>
</dbReference>
<dbReference type="Gene3D" id="3.20.20.70">
    <property type="entry name" value="Aldolase class I"/>
    <property type="match status" value="1"/>
</dbReference>
<dbReference type="HAMAP" id="MF_00097">
    <property type="entry name" value="TMP_synthase"/>
    <property type="match status" value="1"/>
</dbReference>
<dbReference type="InterPro" id="IPR013785">
    <property type="entry name" value="Aldolase_TIM"/>
</dbReference>
<dbReference type="InterPro" id="IPR036206">
    <property type="entry name" value="ThiamineP_synth_sf"/>
</dbReference>
<dbReference type="InterPro" id="IPR022998">
    <property type="entry name" value="ThiamineP_synth_TenI"/>
</dbReference>
<dbReference type="InterPro" id="IPR034291">
    <property type="entry name" value="TMP_synthase"/>
</dbReference>
<dbReference type="NCBIfam" id="NF002904">
    <property type="entry name" value="PRK03512.1"/>
    <property type="match status" value="1"/>
</dbReference>
<dbReference type="NCBIfam" id="TIGR00693">
    <property type="entry name" value="thiE"/>
    <property type="match status" value="1"/>
</dbReference>
<dbReference type="PANTHER" id="PTHR20857">
    <property type="entry name" value="THIAMINE-PHOSPHATE PYROPHOSPHORYLASE"/>
    <property type="match status" value="1"/>
</dbReference>
<dbReference type="PANTHER" id="PTHR20857:SF15">
    <property type="entry name" value="THIAMINE-PHOSPHATE SYNTHASE"/>
    <property type="match status" value="1"/>
</dbReference>
<dbReference type="Pfam" id="PF02581">
    <property type="entry name" value="TMP-TENI"/>
    <property type="match status" value="1"/>
</dbReference>
<dbReference type="SUPFAM" id="SSF51391">
    <property type="entry name" value="Thiamin phosphate synthase"/>
    <property type="match status" value="1"/>
</dbReference>
<gene>
    <name evidence="1" type="primary">thiE</name>
    <name type="ordered locus">c4950</name>
</gene>
<organism>
    <name type="scientific">Escherichia coli O6:H1 (strain CFT073 / ATCC 700928 / UPEC)</name>
    <dbReference type="NCBI Taxonomy" id="199310"/>
    <lineage>
        <taxon>Bacteria</taxon>
        <taxon>Pseudomonadati</taxon>
        <taxon>Pseudomonadota</taxon>
        <taxon>Gammaproteobacteria</taxon>
        <taxon>Enterobacterales</taxon>
        <taxon>Enterobacteriaceae</taxon>
        <taxon>Escherichia</taxon>
    </lineage>
</organism>
<proteinExistence type="inferred from homology"/>
<protein>
    <recommendedName>
        <fullName evidence="1">Thiamine-phosphate synthase</fullName>
        <shortName evidence="1">TP synthase</shortName>
        <shortName evidence="1">TPS</shortName>
        <ecNumber evidence="1">2.5.1.3</ecNumber>
    </recommendedName>
    <alternativeName>
        <fullName evidence="1">Thiamine-phosphate pyrophosphorylase</fullName>
        <shortName evidence="1">TMP pyrophosphorylase</shortName>
        <shortName evidence="1">TMP-PPase</shortName>
    </alternativeName>
</protein>
<name>THIE_ECOL6</name>
<accession>Q8FB78</accession>
<evidence type="ECO:0000255" key="1">
    <source>
        <dbReference type="HAMAP-Rule" id="MF_00097"/>
    </source>
</evidence>
<evidence type="ECO:0000305" key="2"/>
<comment type="function">
    <text evidence="1">Condenses 4-methyl-5-(beta-hydroxyethyl)thiazole monophosphate (THZ-P) and 2-methyl-4-amino-5-hydroxymethyl pyrimidine pyrophosphate (HMP-PP) to form thiamine monophosphate (TMP).</text>
</comment>
<comment type="catalytic activity">
    <reaction evidence="1">
        <text>2-[(2R,5Z)-2-carboxy-4-methylthiazol-5(2H)-ylidene]ethyl phosphate + 4-amino-2-methyl-5-(diphosphooxymethyl)pyrimidine + 2 H(+) = thiamine phosphate + CO2 + diphosphate</text>
        <dbReference type="Rhea" id="RHEA:47844"/>
        <dbReference type="ChEBI" id="CHEBI:15378"/>
        <dbReference type="ChEBI" id="CHEBI:16526"/>
        <dbReference type="ChEBI" id="CHEBI:33019"/>
        <dbReference type="ChEBI" id="CHEBI:37575"/>
        <dbReference type="ChEBI" id="CHEBI:57841"/>
        <dbReference type="ChEBI" id="CHEBI:62899"/>
        <dbReference type="EC" id="2.5.1.3"/>
    </reaction>
</comment>
<comment type="catalytic activity">
    <reaction evidence="1">
        <text>2-(2-carboxy-4-methylthiazol-5-yl)ethyl phosphate + 4-amino-2-methyl-5-(diphosphooxymethyl)pyrimidine + 2 H(+) = thiamine phosphate + CO2 + diphosphate</text>
        <dbReference type="Rhea" id="RHEA:47848"/>
        <dbReference type="ChEBI" id="CHEBI:15378"/>
        <dbReference type="ChEBI" id="CHEBI:16526"/>
        <dbReference type="ChEBI" id="CHEBI:33019"/>
        <dbReference type="ChEBI" id="CHEBI:37575"/>
        <dbReference type="ChEBI" id="CHEBI:57841"/>
        <dbReference type="ChEBI" id="CHEBI:62890"/>
        <dbReference type="EC" id="2.5.1.3"/>
    </reaction>
</comment>
<comment type="catalytic activity">
    <reaction evidence="1">
        <text>4-methyl-5-(2-phosphooxyethyl)-thiazole + 4-amino-2-methyl-5-(diphosphooxymethyl)pyrimidine + H(+) = thiamine phosphate + diphosphate</text>
        <dbReference type="Rhea" id="RHEA:22328"/>
        <dbReference type="ChEBI" id="CHEBI:15378"/>
        <dbReference type="ChEBI" id="CHEBI:33019"/>
        <dbReference type="ChEBI" id="CHEBI:37575"/>
        <dbReference type="ChEBI" id="CHEBI:57841"/>
        <dbReference type="ChEBI" id="CHEBI:58296"/>
        <dbReference type="EC" id="2.5.1.3"/>
    </reaction>
</comment>
<comment type="cofactor">
    <cofactor evidence="1">
        <name>Mg(2+)</name>
        <dbReference type="ChEBI" id="CHEBI:18420"/>
    </cofactor>
    <text evidence="1">Binds 1 Mg(2+) ion per subunit.</text>
</comment>
<comment type="pathway">
    <text evidence="1">Cofactor biosynthesis; thiamine diphosphate biosynthesis; thiamine phosphate from 4-amino-2-methyl-5-diphosphomethylpyrimidine and 4-methyl-5-(2-phosphoethyl)-thiazole: step 1/1.</text>
</comment>
<comment type="similarity">
    <text evidence="1">Belongs to the thiamine-phosphate synthase family.</text>
</comment>
<comment type="sequence caution" evidence="2">
    <conflict type="erroneous initiation">
        <sequence resource="EMBL-CDS" id="AAN83378"/>
    </conflict>
</comment>
<reference key="1">
    <citation type="journal article" date="2002" name="Proc. Natl. Acad. Sci. U.S.A.">
        <title>Extensive mosaic structure revealed by the complete genome sequence of uropathogenic Escherichia coli.</title>
        <authorList>
            <person name="Welch R.A."/>
            <person name="Burland V."/>
            <person name="Plunkett G. III"/>
            <person name="Redford P."/>
            <person name="Roesch P."/>
            <person name="Rasko D."/>
            <person name="Buckles E.L."/>
            <person name="Liou S.-R."/>
            <person name="Boutin A."/>
            <person name="Hackett J."/>
            <person name="Stroud D."/>
            <person name="Mayhew G.F."/>
            <person name="Rose D.J."/>
            <person name="Zhou S."/>
            <person name="Schwartz D.C."/>
            <person name="Perna N.T."/>
            <person name="Mobley H.L.T."/>
            <person name="Donnenberg M.S."/>
            <person name="Blattner F.R."/>
        </authorList>
    </citation>
    <scope>NUCLEOTIDE SEQUENCE [LARGE SCALE GENOMIC DNA]</scope>
    <source>
        <strain>CFT073 / ATCC 700928 / UPEC</strain>
    </source>
</reference>